<dbReference type="EC" id="4.3.2.10"/>
<dbReference type="EMBL" id="U92974">
    <property type="protein sequence ID" value="AAB81909.1"/>
    <property type="molecule type" value="Genomic_DNA"/>
</dbReference>
<dbReference type="EMBL" id="AE005176">
    <property type="protein sequence ID" value="AAK05312.1"/>
    <property type="molecule type" value="Genomic_DNA"/>
</dbReference>
<dbReference type="PIR" id="B47754">
    <property type="entry name" value="B47754"/>
</dbReference>
<dbReference type="PIR" id="F86776">
    <property type="entry name" value="F86776"/>
</dbReference>
<dbReference type="RefSeq" id="NP_267370.1">
    <property type="nucleotide sequence ID" value="NC_002662.1"/>
</dbReference>
<dbReference type="SMR" id="Q02133"/>
<dbReference type="PaxDb" id="272623-L0071"/>
<dbReference type="EnsemblBacteria" id="AAK05312">
    <property type="protein sequence ID" value="AAK05312"/>
    <property type="gene ID" value="L0071"/>
</dbReference>
<dbReference type="KEGG" id="lla:L0071"/>
<dbReference type="PATRIC" id="fig|272623.7.peg.1311"/>
<dbReference type="eggNOG" id="COG0107">
    <property type="taxonomic scope" value="Bacteria"/>
</dbReference>
<dbReference type="HOGENOM" id="CLU_048577_4_0_9"/>
<dbReference type="OrthoDB" id="9781903at2"/>
<dbReference type="UniPathway" id="UPA00031">
    <property type="reaction ID" value="UER00010"/>
</dbReference>
<dbReference type="Proteomes" id="UP000002196">
    <property type="component" value="Chromosome"/>
</dbReference>
<dbReference type="GO" id="GO:0005737">
    <property type="term" value="C:cytoplasm"/>
    <property type="evidence" value="ECO:0007669"/>
    <property type="project" value="UniProtKB-SubCell"/>
</dbReference>
<dbReference type="GO" id="GO:0000107">
    <property type="term" value="F:imidazoleglycerol-phosphate synthase activity"/>
    <property type="evidence" value="ECO:0007669"/>
    <property type="project" value="UniProtKB-UniRule"/>
</dbReference>
<dbReference type="GO" id="GO:0016829">
    <property type="term" value="F:lyase activity"/>
    <property type="evidence" value="ECO:0007669"/>
    <property type="project" value="UniProtKB-KW"/>
</dbReference>
<dbReference type="GO" id="GO:0000105">
    <property type="term" value="P:L-histidine biosynthetic process"/>
    <property type="evidence" value="ECO:0007669"/>
    <property type="project" value="UniProtKB-UniRule"/>
</dbReference>
<dbReference type="CDD" id="cd04731">
    <property type="entry name" value="HisF"/>
    <property type="match status" value="1"/>
</dbReference>
<dbReference type="FunFam" id="3.20.20.70:FF:000006">
    <property type="entry name" value="Imidazole glycerol phosphate synthase subunit HisF"/>
    <property type="match status" value="1"/>
</dbReference>
<dbReference type="Gene3D" id="3.20.20.70">
    <property type="entry name" value="Aldolase class I"/>
    <property type="match status" value="1"/>
</dbReference>
<dbReference type="HAMAP" id="MF_01013">
    <property type="entry name" value="HisF"/>
    <property type="match status" value="1"/>
</dbReference>
<dbReference type="InterPro" id="IPR013785">
    <property type="entry name" value="Aldolase_TIM"/>
</dbReference>
<dbReference type="InterPro" id="IPR006062">
    <property type="entry name" value="His_biosynth"/>
</dbReference>
<dbReference type="InterPro" id="IPR004651">
    <property type="entry name" value="HisF"/>
</dbReference>
<dbReference type="InterPro" id="IPR050064">
    <property type="entry name" value="IGPS_HisA/HisF"/>
</dbReference>
<dbReference type="InterPro" id="IPR011060">
    <property type="entry name" value="RibuloseP-bd_barrel"/>
</dbReference>
<dbReference type="NCBIfam" id="TIGR00735">
    <property type="entry name" value="hisF"/>
    <property type="match status" value="1"/>
</dbReference>
<dbReference type="PANTHER" id="PTHR21235:SF2">
    <property type="entry name" value="IMIDAZOLE GLYCEROL PHOSPHATE SYNTHASE HISHF"/>
    <property type="match status" value="1"/>
</dbReference>
<dbReference type="PANTHER" id="PTHR21235">
    <property type="entry name" value="IMIDAZOLE GLYCEROL PHOSPHATE SYNTHASE SUBUNIT HISF/H IGP SYNTHASE SUBUNIT HISF/H"/>
    <property type="match status" value="1"/>
</dbReference>
<dbReference type="Pfam" id="PF00977">
    <property type="entry name" value="His_biosynth"/>
    <property type="match status" value="1"/>
</dbReference>
<dbReference type="SUPFAM" id="SSF51366">
    <property type="entry name" value="Ribulose-phoshate binding barrel"/>
    <property type="match status" value="1"/>
</dbReference>
<feature type="chain" id="PRO_0000142170" description="Imidazole glycerol phosphate synthase subunit HisF">
    <location>
        <begin position="1"/>
        <end position="259"/>
    </location>
</feature>
<feature type="active site" evidence="2">
    <location>
        <position position="11"/>
    </location>
</feature>
<feature type="active site" evidence="2">
    <location>
        <position position="130"/>
    </location>
</feature>
<feature type="sequence variant" description="In strain: IL1403.">
    <original>G</original>
    <variation>S</variation>
    <location>
        <position position="25"/>
    </location>
</feature>
<feature type="sequence variant" description="In strain: IL1403.">
    <original>P</original>
    <variation>S</variation>
    <location>
        <position position="32"/>
    </location>
</feature>
<feature type="sequence variant" description="In strain: IL1403.">
    <original>V</original>
    <variation>F</variation>
    <location>
        <position position="79"/>
    </location>
</feature>
<feature type="sequence variant" description="In strain: IL1403.">
    <original>F</original>
    <variation>L</variation>
    <location>
        <position position="120"/>
    </location>
</feature>
<feature type="sequence variant" description="In strain: IL1403.">
    <original>F</original>
    <variation>V</variation>
    <location>
        <position position="226"/>
    </location>
</feature>
<feature type="sequence conflict" description="In Ref. 1." evidence="3" ref="1">
    <original>ATVDEVKDELIKNNIPARIIKKET</original>
    <variation>EQLMKLKTN</variation>
    <location>
        <begin position="235"/>
        <end position="258"/>
    </location>
</feature>
<accession>Q02133</accession>
<accession>Q9CG91</accession>
<gene>
    <name type="primary">hisF</name>
    <name type="ordered locus">LL1214</name>
    <name type="ORF">L0071</name>
</gene>
<protein>
    <recommendedName>
        <fullName>Imidazole glycerol phosphate synthase subunit HisF</fullName>
        <ecNumber>4.3.2.10</ecNumber>
    </recommendedName>
    <alternativeName>
        <fullName>IGP synthase cyclase subunit</fullName>
    </alternativeName>
    <alternativeName>
        <fullName>IGP synthase subunit HisF</fullName>
    </alternativeName>
    <alternativeName>
        <fullName>ImGP synthase subunit HisF</fullName>
        <shortName>IGPS subunit HisF</shortName>
    </alternativeName>
</protein>
<organism>
    <name type="scientific">Lactococcus lactis subsp. lactis (strain IL1403)</name>
    <name type="common">Streptococcus lactis</name>
    <dbReference type="NCBI Taxonomy" id="272623"/>
    <lineage>
        <taxon>Bacteria</taxon>
        <taxon>Bacillati</taxon>
        <taxon>Bacillota</taxon>
        <taxon>Bacilli</taxon>
        <taxon>Lactobacillales</taxon>
        <taxon>Streptococcaceae</taxon>
        <taxon>Lactococcus</taxon>
    </lineage>
</organism>
<comment type="function">
    <text evidence="1">IGPS catalyzes the conversion of PRFAR and glutamine to IGP, AICAR and glutamate. The HisF subunit catalyzes the cyclization activity that produces IGP and AICAR from PRFAR using the ammonia provided by the HisH subunit (By similarity).</text>
</comment>
<comment type="catalytic activity">
    <reaction>
        <text>5-[(5-phospho-1-deoxy-D-ribulos-1-ylimino)methylamino]-1-(5-phospho-beta-D-ribosyl)imidazole-4-carboxamide + L-glutamine = D-erythro-1-(imidazol-4-yl)glycerol 3-phosphate + 5-amino-1-(5-phospho-beta-D-ribosyl)imidazole-4-carboxamide + L-glutamate + H(+)</text>
        <dbReference type="Rhea" id="RHEA:24793"/>
        <dbReference type="ChEBI" id="CHEBI:15378"/>
        <dbReference type="ChEBI" id="CHEBI:29985"/>
        <dbReference type="ChEBI" id="CHEBI:58278"/>
        <dbReference type="ChEBI" id="CHEBI:58359"/>
        <dbReference type="ChEBI" id="CHEBI:58475"/>
        <dbReference type="ChEBI" id="CHEBI:58525"/>
        <dbReference type="EC" id="4.3.2.10"/>
    </reaction>
</comment>
<comment type="pathway">
    <text>Amino-acid biosynthesis; L-histidine biosynthesis; L-histidine from 5-phospho-alpha-D-ribose 1-diphosphate: step 5/9.</text>
</comment>
<comment type="subunit">
    <text evidence="1">Heterodimer of HisH and HisF.</text>
</comment>
<comment type="subcellular location">
    <subcellularLocation>
        <location evidence="1">Cytoplasm</location>
    </subcellularLocation>
</comment>
<comment type="similarity">
    <text evidence="3">Belongs to the HisA/HisF family.</text>
</comment>
<comment type="caution">
    <text evidence="3">The histidine biosynthesis pathway is not functional in the dairy strain IL1403.</text>
</comment>
<name>HIS6_LACLA</name>
<proteinExistence type="inferred from homology"/>
<keyword id="KW-0028">Amino-acid biosynthesis</keyword>
<keyword id="KW-0963">Cytoplasm</keyword>
<keyword id="KW-0368">Histidine biosynthesis</keyword>
<keyword id="KW-0456">Lyase</keyword>
<keyword id="KW-1185">Reference proteome</keyword>
<sequence>MLTKRIIPCLDIKNGKVVKGINFVGLREIGDPVELAKIYEEQCADEIVFLDITASFEEREIIGELIGRAARELSIPLTVGGGIRSIDDFRRILARGADKVSVNSAAIENPELIRQAANEFGVQCVVVAIDAKKRADHRGYDVYIKGGRENAGLDLVDWAKKCERLGAGEILLTSMDKDGTKTGYDLEMLNDVCTAVNIPVVASGGCGKISDIVEVFQNTRSDAALFASLFHYGEATVDEVKDELIKNNIPARIIKKETL</sequence>
<evidence type="ECO:0000250" key="1"/>
<evidence type="ECO:0000255" key="2"/>
<evidence type="ECO:0000305" key="3"/>
<reference key="1">
    <citation type="journal article" date="1992" name="J. Bacteriol.">
        <title>Histidine biosynthesis genes in Lactococcus lactis subsp. lactis.</title>
        <authorList>
            <person name="Delorme C."/>
            <person name="Ehrlich S.D."/>
            <person name="Renault P."/>
        </authorList>
    </citation>
    <scope>NUCLEOTIDE SEQUENCE [GENOMIC DNA]</scope>
    <source>
        <strain>NCDO 2118</strain>
    </source>
</reference>
<reference key="2">
    <citation type="journal article" date="2001" name="Genome Res.">
        <title>The complete genome sequence of the lactic acid bacterium Lactococcus lactis ssp. lactis IL1403.</title>
        <authorList>
            <person name="Bolotin A."/>
            <person name="Wincker P."/>
            <person name="Mauger S."/>
            <person name="Jaillon O."/>
            <person name="Malarme K."/>
            <person name="Weissenbach J."/>
            <person name="Ehrlich S.D."/>
            <person name="Sorokin A."/>
        </authorList>
    </citation>
    <scope>NUCLEOTIDE SEQUENCE [LARGE SCALE GENOMIC DNA]</scope>
    <source>
        <strain>IL1403</strain>
    </source>
</reference>
<reference key="3">
    <citation type="journal article" date="1993" name="J. Bacteriol.">
        <title>Gene inactivation in Lactococcus lactis: histidine biosynthesis.</title>
        <authorList>
            <person name="Delorme C."/>
            <person name="Godon J.-J."/>
            <person name="Ehrlich S.D."/>
            <person name="Renault P."/>
        </authorList>
    </citation>
    <scope>NUCLEOTIDE SEQUENCE [GENOMIC DNA] OF 1-83</scope>
    <source>
        <strain>IL1403</strain>
    </source>
</reference>